<protein>
    <recommendedName>
        <fullName>Probable serine/threonine-protein kinase MRK1 homolog</fullName>
        <ecNumber>2.7.11.1</ecNumber>
    </recommendedName>
</protein>
<gene>
    <name type="primary">MRK1</name>
    <name type="ordered locus">ECU07_1270</name>
</gene>
<proteinExistence type="inferred from homology"/>
<organism>
    <name type="scientific">Encephalitozoon cuniculi (strain GB-M1)</name>
    <name type="common">Microsporidian parasite</name>
    <dbReference type="NCBI Taxonomy" id="284813"/>
    <lineage>
        <taxon>Eukaryota</taxon>
        <taxon>Fungi</taxon>
        <taxon>Fungi incertae sedis</taxon>
        <taxon>Microsporidia</taxon>
        <taxon>Unikaryonidae</taxon>
        <taxon>Encephalitozoon</taxon>
    </lineage>
</organism>
<feature type="chain" id="PRO_0000385510" description="Probable serine/threonine-protein kinase MRK1 homolog">
    <location>
        <begin position="1"/>
        <end position="318"/>
    </location>
</feature>
<feature type="domain" description="Protein kinase" evidence="2">
    <location>
        <begin position="40"/>
        <end position="313"/>
    </location>
</feature>
<feature type="active site" description="Proton acceptor" evidence="2 3">
    <location>
        <position position="159"/>
    </location>
</feature>
<feature type="binding site" evidence="2">
    <location>
        <begin position="46"/>
        <end position="54"/>
    </location>
    <ligand>
        <name>ATP</name>
        <dbReference type="ChEBI" id="CHEBI:30616"/>
    </ligand>
</feature>
<feature type="binding site" evidence="2">
    <location>
        <position position="68"/>
    </location>
    <ligand>
        <name>ATP</name>
        <dbReference type="ChEBI" id="CHEBI:30616"/>
    </ligand>
</feature>
<comment type="function">
    <text>May play a role in the initiation and completion of mitosis.</text>
</comment>
<comment type="catalytic activity">
    <reaction>
        <text>L-seryl-[protein] + ATP = O-phospho-L-seryl-[protein] + ADP + H(+)</text>
        <dbReference type="Rhea" id="RHEA:17989"/>
        <dbReference type="Rhea" id="RHEA-COMP:9863"/>
        <dbReference type="Rhea" id="RHEA-COMP:11604"/>
        <dbReference type="ChEBI" id="CHEBI:15378"/>
        <dbReference type="ChEBI" id="CHEBI:29999"/>
        <dbReference type="ChEBI" id="CHEBI:30616"/>
        <dbReference type="ChEBI" id="CHEBI:83421"/>
        <dbReference type="ChEBI" id="CHEBI:456216"/>
        <dbReference type="EC" id="2.7.11.1"/>
    </reaction>
</comment>
<comment type="catalytic activity">
    <reaction>
        <text>L-threonyl-[protein] + ATP = O-phospho-L-threonyl-[protein] + ADP + H(+)</text>
        <dbReference type="Rhea" id="RHEA:46608"/>
        <dbReference type="Rhea" id="RHEA-COMP:11060"/>
        <dbReference type="Rhea" id="RHEA-COMP:11605"/>
        <dbReference type="ChEBI" id="CHEBI:15378"/>
        <dbReference type="ChEBI" id="CHEBI:30013"/>
        <dbReference type="ChEBI" id="CHEBI:30616"/>
        <dbReference type="ChEBI" id="CHEBI:61977"/>
        <dbReference type="ChEBI" id="CHEBI:456216"/>
        <dbReference type="EC" id="2.7.11.1"/>
    </reaction>
</comment>
<comment type="subcellular location">
    <subcellularLocation>
        <location evidence="1">Cytoplasm</location>
    </subcellularLocation>
    <subcellularLocation>
        <location evidence="1">Nucleus</location>
    </subcellularLocation>
</comment>
<comment type="similarity">
    <text evidence="4">Belongs to the protein kinase superfamily. CMGC Ser/Thr protein kinase family. GSK-3 subfamily.</text>
</comment>
<keyword id="KW-0067">ATP-binding</keyword>
<keyword id="KW-0131">Cell cycle</keyword>
<keyword id="KW-0132">Cell division</keyword>
<keyword id="KW-0963">Cytoplasm</keyword>
<keyword id="KW-0418">Kinase</keyword>
<keyword id="KW-0498">Mitosis</keyword>
<keyword id="KW-0547">Nucleotide-binding</keyword>
<keyword id="KW-0539">Nucleus</keyword>
<keyword id="KW-1185">Reference proteome</keyword>
<keyword id="KW-0723">Serine/threonine-protein kinase</keyword>
<keyword id="KW-0808">Transferase</keyword>
<name>MRK1_ENCCU</name>
<dbReference type="EC" id="2.7.11.1"/>
<dbReference type="EMBL" id="AL590447">
    <property type="protein sequence ID" value="CAD25660.2"/>
    <property type="molecule type" value="Genomic_DNA"/>
</dbReference>
<dbReference type="RefSeq" id="NP_586056.1">
    <property type="nucleotide sequence ID" value="NM_001041678.1"/>
</dbReference>
<dbReference type="SMR" id="Q8SRI3"/>
<dbReference type="FunCoup" id="Q8SRI3">
    <property type="interactions" value="113"/>
</dbReference>
<dbReference type="STRING" id="284813.Q8SRI3"/>
<dbReference type="GeneID" id="859486"/>
<dbReference type="KEGG" id="ecu:ECU07_1270"/>
<dbReference type="VEuPathDB" id="MicrosporidiaDB:ECU07_1270"/>
<dbReference type="HOGENOM" id="CLU_000288_181_20_1"/>
<dbReference type="InParanoid" id="Q8SRI3"/>
<dbReference type="OrthoDB" id="272141at2759"/>
<dbReference type="Proteomes" id="UP000000819">
    <property type="component" value="Chromosome VII"/>
</dbReference>
<dbReference type="GO" id="GO:0005737">
    <property type="term" value="C:cytoplasm"/>
    <property type="evidence" value="ECO:0007669"/>
    <property type="project" value="UniProtKB-SubCell"/>
</dbReference>
<dbReference type="GO" id="GO:0005634">
    <property type="term" value="C:nucleus"/>
    <property type="evidence" value="ECO:0007669"/>
    <property type="project" value="UniProtKB-SubCell"/>
</dbReference>
<dbReference type="GO" id="GO:0005524">
    <property type="term" value="F:ATP binding"/>
    <property type="evidence" value="ECO:0007669"/>
    <property type="project" value="UniProtKB-KW"/>
</dbReference>
<dbReference type="GO" id="GO:0106310">
    <property type="term" value="F:protein serine kinase activity"/>
    <property type="evidence" value="ECO:0007669"/>
    <property type="project" value="RHEA"/>
</dbReference>
<dbReference type="GO" id="GO:0004674">
    <property type="term" value="F:protein serine/threonine kinase activity"/>
    <property type="evidence" value="ECO:0007669"/>
    <property type="project" value="UniProtKB-KW"/>
</dbReference>
<dbReference type="GO" id="GO:0030154">
    <property type="term" value="P:cell differentiation"/>
    <property type="evidence" value="ECO:0007669"/>
    <property type="project" value="TreeGrafter"/>
</dbReference>
<dbReference type="GO" id="GO:0051301">
    <property type="term" value="P:cell division"/>
    <property type="evidence" value="ECO:0007669"/>
    <property type="project" value="UniProtKB-KW"/>
</dbReference>
<dbReference type="GO" id="GO:0007165">
    <property type="term" value="P:signal transduction"/>
    <property type="evidence" value="ECO:0007669"/>
    <property type="project" value="TreeGrafter"/>
</dbReference>
<dbReference type="FunFam" id="1.10.510.10:FF:000624">
    <property type="entry name" value="Mitogen-activated protein kinase"/>
    <property type="match status" value="1"/>
</dbReference>
<dbReference type="Gene3D" id="3.30.200.20">
    <property type="entry name" value="Phosphorylase Kinase, domain 1"/>
    <property type="match status" value="1"/>
</dbReference>
<dbReference type="Gene3D" id="1.10.510.10">
    <property type="entry name" value="Transferase(Phosphotransferase) domain 1"/>
    <property type="match status" value="1"/>
</dbReference>
<dbReference type="InterPro" id="IPR050591">
    <property type="entry name" value="GSK-3"/>
</dbReference>
<dbReference type="InterPro" id="IPR011009">
    <property type="entry name" value="Kinase-like_dom_sf"/>
</dbReference>
<dbReference type="InterPro" id="IPR000719">
    <property type="entry name" value="Prot_kinase_dom"/>
</dbReference>
<dbReference type="InterPro" id="IPR017441">
    <property type="entry name" value="Protein_kinase_ATP_BS"/>
</dbReference>
<dbReference type="InterPro" id="IPR008271">
    <property type="entry name" value="Ser/Thr_kinase_AS"/>
</dbReference>
<dbReference type="PANTHER" id="PTHR24057">
    <property type="entry name" value="GLYCOGEN SYNTHASE KINASE-3 ALPHA"/>
    <property type="match status" value="1"/>
</dbReference>
<dbReference type="PANTHER" id="PTHR24057:SF0">
    <property type="entry name" value="PROTEIN KINASE SHAGGY-RELATED"/>
    <property type="match status" value="1"/>
</dbReference>
<dbReference type="Pfam" id="PF00069">
    <property type="entry name" value="Pkinase"/>
    <property type="match status" value="1"/>
</dbReference>
<dbReference type="SMART" id="SM00220">
    <property type="entry name" value="S_TKc"/>
    <property type="match status" value="1"/>
</dbReference>
<dbReference type="SUPFAM" id="SSF56112">
    <property type="entry name" value="Protein kinase-like (PK-like)"/>
    <property type="match status" value="1"/>
</dbReference>
<dbReference type="PROSITE" id="PS00107">
    <property type="entry name" value="PROTEIN_KINASE_ATP"/>
    <property type="match status" value="1"/>
</dbReference>
<dbReference type="PROSITE" id="PS50011">
    <property type="entry name" value="PROTEIN_KINASE_DOM"/>
    <property type="match status" value="1"/>
</dbReference>
<dbReference type="PROSITE" id="PS00108">
    <property type="entry name" value="PROTEIN_KINASE_ST"/>
    <property type="match status" value="1"/>
</dbReference>
<accession>Q8SRI3</accession>
<evidence type="ECO:0000250" key="1"/>
<evidence type="ECO:0000255" key="2">
    <source>
        <dbReference type="PROSITE-ProRule" id="PRU00159"/>
    </source>
</evidence>
<evidence type="ECO:0000255" key="3">
    <source>
        <dbReference type="PROSITE-ProRule" id="PRU10027"/>
    </source>
</evidence>
<evidence type="ECO:0000305" key="4"/>
<sequence length="318" mass="36918">MATLSQKKLMESVRLMEREWVKMHKALVRSRCGEVKEVRYRYVEMIGRGSFGVVVKIMDDRHNFFALKRVYQDRRYHNRELGILMEVDHPNIVRLVSYFHTDKTSSGAYLNIITDFVGMNLEEYIKANRGVETEEIRSVYRQILEGLRYLHEKNICHRDMKPSNILIDTNGLVKICDLGSAKVIKSGERNITYICSRFYRAPENLLDYKEYDFKIDIWSVGCVIAEFRHPGPIFKGDTSGSTLNRILEIVRVTSDDLIGLGCLKPDLKQGVGIRKYLEAFFSDPDLLEVLEKSLAFSPCKRSTASELLRKQFFQQAHE</sequence>
<reference key="1">
    <citation type="journal article" date="2001" name="Nature">
        <title>Genome sequence and gene compaction of the eukaryote parasite Encephalitozoon cuniculi.</title>
        <authorList>
            <person name="Katinka M.D."/>
            <person name="Duprat S."/>
            <person name="Cornillot E."/>
            <person name="Metenier G."/>
            <person name="Thomarat F."/>
            <person name="Prensier G."/>
            <person name="Barbe V."/>
            <person name="Peyretaillade E."/>
            <person name="Brottier P."/>
            <person name="Wincker P."/>
            <person name="Delbac F."/>
            <person name="El Alaoui H."/>
            <person name="Peyret P."/>
            <person name="Saurin W."/>
            <person name="Gouy M."/>
            <person name="Weissenbach J."/>
            <person name="Vivares C.P."/>
        </authorList>
    </citation>
    <scope>NUCLEOTIDE SEQUENCE [LARGE SCALE GENOMIC DNA]</scope>
    <source>
        <strain>GB-M1</strain>
    </source>
</reference>
<reference key="2">
    <citation type="journal article" date="2009" name="BMC Genomics">
        <title>Identification of transcriptional signals in Encephalitozoon cuniculi widespread among Microsporidia phylum: support for accurate structural genome annotation.</title>
        <authorList>
            <person name="Peyretaillade E."/>
            <person name="Goncalves O."/>
            <person name="Terrat S."/>
            <person name="Dugat-Bony E."/>
            <person name="Wincker P."/>
            <person name="Cornman R.S."/>
            <person name="Evans J.D."/>
            <person name="Delbac F."/>
            <person name="Peyret P."/>
        </authorList>
    </citation>
    <scope>GENOME REANNOTATION</scope>
    <source>
        <strain>GB-M1</strain>
    </source>
</reference>
<reference key="3">
    <citation type="journal article" date="2007" name="BMC Genomics">
        <title>The complement of protein kinases of the microsporidium Encephalitozoon cuniculi in relation to those of Saccharomyces cerevisiae and Schizosaccharomyces pombe.</title>
        <authorList>
            <person name="Miranda-Saavedra D."/>
            <person name="Stark M.J.R."/>
            <person name="Packer J.C."/>
            <person name="Vivares C.P."/>
            <person name="Doerig C."/>
            <person name="Barton G.J."/>
        </authorList>
    </citation>
    <scope>PREDICTION OF FUNCTION</scope>
</reference>